<protein>
    <recommendedName>
        <fullName>UPF0598 protein C8orf82 homolog</fullName>
    </recommendedName>
</protein>
<keyword id="KW-1185">Reference proteome</keyword>
<accession>Q642A4</accession>
<dbReference type="EMBL" id="BC081992">
    <property type="protein sequence ID" value="AAH81992.1"/>
    <property type="molecule type" value="mRNA"/>
</dbReference>
<dbReference type="RefSeq" id="NP_001007752.1">
    <property type="nucleotide sequence ID" value="NM_001007751.1"/>
</dbReference>
<dbReference type="FunCoup" id="Q642A4">
    <property type="interactions" value="261"/>
</dbReference>
<dbReference type="STRING" id="10116.ENSRNOP00000021775"/>
<dbReference type="PhosphoSitePlus" id="Q642A4"/>
<dbReference type="SwissPalm" id="Q642A4"/>
<dbReference type="PaxDb" id="10116-ENSRNOP00000021775"/>
<dbReference type="Ensembl" id="ENSRNOT00000099926.1">
    <property type="protein sequence ID" value="ENSRNOP00000096970.1"/>
    <property type="gene ID" value="ENSRNOG00000068599.1"/>
</dbReference>
<dbReference type="GeneID" id="362946"/>
<dbReference type="KEGG" id="rno:362946"/>
<dbReference type="UCSC" id="RGD:1359663">
    <property type="organism name" value="rat"/>
</dbReference>
<dbReference type="AGR" id="RGD:1359663"/>
<dbReference type="CTD" id="362946"/>
<dbReference type="RGD" id="1359663">
    <property type="gene designation" value="C7h8orf82"/>
</dbReference>
<dbReference type="eggNOG" id="ENOG502R8EE">
    <property type="taxonomic scope" value="Eukaryota"/>
</dbReference>
<dbReference type="GeneTree" id="ENSGT00390000011521"/>
<dbReference type="HOGENOM" id="CLU_069446_2_0_1"/>
<dbReference type="InParanoid" id="Q642A4"/>
<dbReference type="OMA" id="IKNFTSC"/>
<dbReference type="OrthoDB" id="10260024at2759"/>
<dbReference type="PRO" id="PR:Q642A4"/>
<dbReference type="Proteomes" id="UP000002494">
    <property type="component" value="Chromosome 7"/>
</dbReference>
<dbReference type="Bgee" id="ENSRNOG00000045765">
    <property type="expression patterns" value="Expressed in kidney and 20 other cell types or tissues"/>
</dbReference>
<dbReference type="InterPro" id="IPR028108">
    <property type="entry name" value="DUF4505"/>
</dbReference>
<dbReference type="PANTHER" id="PTHR31449">
    <property type="entry name" value="UPF0598 PROTEIN C8ORF82"/>
    <property type="match status" value="1"/>
</dbReference>
<dbReference type="PANTHER" id="PTHR31449:SF3">
    <property type="entry name" value="UPF0598 PROTEIN C8ORF82"/>
    <property type="match status" value="1"/>
</dbReference>
<dbReference type="Pfam" id="PF14956">
    <property type="entry name" value="DUF4505"/>
    <property type="match status" value="1"/>
</dbReference>
<proteinExistence type="evidence at transcript level"/>
<name>CH082_RAT</name>
<comment type="similarity">
    <text evidence="1">Belongs to the UPF0598 family.</text>
</comment>
<organism>
    <name type="scientific">Rattus norvegicus</name>
    <name type="common">Rat</name>
    <dbReference type="NCBI Taxonomy" id="10116"/>
    <lineage>
        <taxon>Eukaryota</taxon>
        <taxon>Metazoa</taxon>
        <taxon>Chordata</taxon>
        <taxon>Craniata</taxon>
        <taxon>Vertebrata</taxon>
        <taxon>Euteleostomi</taxon>
        <taxon>Mammalia</taxon>
        <taxon>Eutheria</taxon>
        <taxon>Euarchontoglires</taxon>
        <taxon>Glires</taxon>
        <taxon>Rodentia</taxon>
        <taxon>Myomorpha</taxon>
        <taxon>Muroidea</taxon>
        <taxon>Muridae</taxon>
        <taxon>Murinae</taxon>
        <taxon>Rattus</taxon>
    </lineage>
</organism>
<feature type="chain" id="PRO_0000340671" description="UPF0598 protein C8orf82 homolog">
    <location>
        <begin position="1"/>
        <end position="218"/>
    </location>
</feature>
<reference key="1">
    <citation type="journal article" date="2004" name="Genome Res.">
        <title>The status, quality, and expansion of the NIH full-length cDNA project: the Mammalian Gene Collection (MGC).</title>
        <authorList>
            <consortium name="The MGC Project Team"/>
        </authorList>
    </citation>
    <scope>NUCLEOTIDE SEQUENCE [LARGE SCALE MRNA]</scope>
    <source>
        <tissue>Kidney</tissue>
    </source>
</reference>
<sequence>MWPPCGAMRNLALVLARSQRARACSGNERVSYTQGQSPEPRTREYFYYVDHQGQLFLDDSKMKNFITCFKDLQFLVTFFSRLRPNHSGRYEASFPFLSLCGRERNFLRCEDRPVVFTHLLASDSESPRLSYCGGGEALAIPFEPARLLPLAANGRLYHPAPERAGGVGLVRSALAFELSACFEYGPNSPTVPSHVQWQGRRIALTMDLAPLLLAAPPP</sequence>
<evidence type="ECO:0000305" key="1"/>